<evidence type="ECO:0000255" key="1">
    <source>
        <dbReference type="HAMAP-Rule" id="MF_01227"/>
    </source>
</evidence>
<gene>
    <name evidence="1" type="primary">pyrG</name>
    <name type="ordered locus">Dgeo_0827</name>
</gene>
<reference key="1">
    <citation type="submission" date="2006-04" db="EMBL/GenBank/DDBJ databases">
        <title>Complete sequence of chromosome of Deinococcus geothermalis DSM 11300.</title>
        <authorList>
            <person name="Copeland A."/>
            <person name="Lucas S."/>
            <person name="Lapidus A."/>
            <person name="Barry K."/>
            <person name="Detter J.C."/>
            <person name="Glavina del Rio T."/>
            <person name="Hammon N."/>
            <person name="Israni S."/>
            <person name="Dalin E."/>
            <person name="Tice H."/>
            <person name="Pitluck S."/>
            <person name="Brettin T."/>
            <person name="Bruce D."/>
            <person name="Han C."/>
            <person name="Tapia R."/>
            <person name="Saunders E."/>
            <person name="Gilna P."/>
            <person name="Schmutz J."/>
            <person name="Larimer F."/>
            <person name="Land M."/>
            <person name="Hauser L."/>
            <person name="Kyrpides N."/>
            <person name="Kim E."/>
            <person name="Daly M.J."/>
            <person name="Fredrickson J.K."/>
            <person name="Makarova K.S."/>
            <person name="Gaidamakova E.K."/>
            <person name="Zhai M."/>
            <person name="Richardson P."/>
        </authorList>
    </citation>
    <scope>NUCLEOTIDE SEQUENCE [LARGE SCALE GENOMIC DNA]</scope>
    <source>
        <strain>DSM 11300 / CIP 105573 / AG-3a</strain>
    </source>
</reference>
<proteinExistence type="inferred from homology"/>
<keyword id="KW-0067">ATP-binding</keyword>
<keyword id="KW-0315">Glutamine amidotransferase</keyword>
<keyword id="KW-0436">Ligase</keyword>
<keyword id="KW-0460">Magnesium</keyword>
<keyword id="KW-0479">Metal-binding</keyword>
<keyword id="KW-0547">Nucleotide-binding</keyword>
<keyword id="KW-0665">Pyrimidine biosynthesis</keyword>
<organism>
    <name type="scientific">Deinococcus geothermalis (strain DSM 11300 / CIP 105573 / AG-3a)</name>
    <dbReference type="NCBI Taxonomy" id="319795"/>
    <lineage>
        <taxon>Bacteria</taxon>
        <taxon>Thermotogati</taxon>
        <taxon>Deinococcota</taxon>
        <taxon>Deinococci</taxon>
        <taxon>Deinococcales</taxon>
        <taxon>Deinococcaceae</taxon>
        <taxon>Deinococcus</taxon>
    </lineage>
</organism>
<comment type="function">
    <text evidence="1">Catalyzes the ATP-dependent amination of UTP to CTP with either L-glutamine or ammonia as the source of nitrogen. Regulates intracellular CTP levels through interactions with the four ribonucleotide triphosphates.</text>
</comment>
<comment type="catalytic activity">
    <reaction evidence="1">
        <text>UTP + L-glutamine + ATP + H2O = CTP + L-glutamate + ADP + phosphate + 2 H(+)</text>
        <dbReference type="Rhea" id="RHEA:26426"/>
        <dbReference type="ChEBI" id="CHEBI:15377"/>
        <dbReference type="ChEBI" id="CHEBI:15378"/>
        <dbReference type="ChEBI" id="CHEBI:29985"/>
        <dbReference type="ChEBI" id="CHEBI:30616"/>
        <dbReference type="ChEBI" id="CHEBI:37563"/>
        <dbReference type="ChEBI" id="CHEBI:43474"/>
        <dbReference type="ChEBI" id="CHEBI:46398"/>
        <dbReference type="ChEBI" id="CHEBI:58359"/>
        <dbReference type="ChEBI" id="CHEBI:456216"/>
        <dbReference type="EC" id="6.3.4.2"/>
    </reaction>
</comment>
<comment type="catalytic activity">
    <reaction evidence="1">
        <text>L-glutamine + H2O = L-glutamate + NH4(+)</text>
        <dbReference type="Rhea" id="RHEA:15889"/>
        <dbReference type="ChEBI" id="CHEBI:15377"/>
        <dbReference type="ChEBI" id="CHEBI:28938"/>
        <dbReference type="ChEBI" id="CHEBI:29985"/>
        <dbReference type="ChEBI" id="CHEBI:58359"/>
    </reaction>
</comment>
<comment type="catalytic activity">
    <reaction evidence="1">
        <text>UTP + NH4(+) + ATP = CTP + ADP + phosphate + 2 H(+)</text>
        <dbReference type="Rhea" id="RHEA:16597"/>
        <dbReference type="ChEBI" id="CHEBI:15378"/>
        <dbReference type="ChEBI" id="CHEBI:28938"/>
        <dbReference type="ChEBI" id="CHEBI:30616"/>
        <dbReference type="ChEBI" id="CHEBI:37563"/>
        <dbReference type="ChEBI" id="CHEBI:43474"/>
        <dbReference type="ChEBI" id="CHEBI:46398"/>
        <dbReference type="ChEBI" id="CHEBI:456216"/>
    </reaction>
</comment>
<comment type="activity regulation">
    <text evidence="1">Allosterically activated by GTP, when glutamine is the substrate; GTP has no effect on the reaction when ammonia is the substrate. The allosteric effector GTP functions by stabilizing the protein conformation that binds the tetrahedral intermediate(s) formed during glutamine hydrolysis. Inhibited by the product CTP, via allosteric rather than competitive inhibition.</text>
</comment>
<comment type="pathway">
    <text evidence="1">Pyrimidine metabolism; CTP biosynthesis via de novo pathway; CTP from UDP: step 2/2.</text>
</comment>
<comment type="subunit">
    <text evidence="1">Homotetramer.</text>
</comment>
<comment type="miscellaneous">
    <text evidence="1">CTPSs have evolved a hybrid strategy for distinguishing between UTP and CTP. The overlapping regions of the product feedback inhibitory and substrate sites recognize a common feature in both compounds, the triphosphate moiety. To differentiate isosteric substrate and product pyrimidine rings, an additional pocket far from the expected kinase/ligase catalytic site, specifically recognizes the cytosine and ribose portions of the product inhibitor.</text>
</comment>
<comment type="similarity">
    <text evidence="1">Belongs to the CTP synthase family.</text>
</comment>
<feature type="chain" id="PRO_0000266106" description="CTP synthase">
    <location>
        <begin position="1"/>
        <end position="553"/>
    </location>
</feature>
<feature type="domain" description="Glutamine amidotransferase type-1" evidence="1">
    <location>
        <begin position="291"/>
        <end position="541"/>
    </location>
</feature>
<feature type="region of interest" description="Amidoligase domain" evidence="1">
    <location>
        <begin position="1"/>
        <end position="266"/>
    </location>
</feature>
<feature type="active site" description="Nucleophile; for glutamine hydrolysis" evidence="1">
    <location>
        <position position="380"/>
    </location>
</feature>
<feature type="active site" evidence="1">
    <location>
        <position position="514"/>
    </location>
</feature>
<feature type="active site" evidence="1">
    <location>
        <position position="516"/>
    </location>
</feature>
<feature type="binding site" evidence="1">
    <location>
        <position position="12"/>
    </location>
    <ligand>
        <name>CTP</name>
        <dbReference type="ChEBI" id="CHEBI:37563"/>
        <note>allosteric inhibitor</note>
    </ligand>
</feature>
<feature type="binding site" evidence="1">
    <location>
        <position position="12"/>
    </location>
    <ligand>
        <name>UTP</name>
        <dbReference type="ChEBI" id="CHEBI:46398"/>
    </ligand>
</feature>
<feature type="binding site" evidence="1">
    <location>
        <begin position="13"/>
        <end position="18"/>
    </location>
    <ligand>
        <name>ATP</name>
        <dbReference type="ChEBI" id="CHEBI:30616"/>
    </ligand>
</feature>
<feature type="binding site" evidence="1">
    <location>
        <position position="53"/>
    </location>
    <ligand>
        <name>L-glutamine</name>
        <dbReference type="ChEBI" id="CHEBI:58359"/>
    </ligand>
</feature>
<feature type="binding site" evidence="1">
    <location>
        <position position="70"/>
    </location>
    <ligand>
        <name>ATP</name>
        <dbReference type="ChEBI" id="CHEBI:30616"/>
    </ligand>
</feature>
<feature type="binding site" evidence="1">
    <location>
        <position position="70"/>
    </location>
    <ligand>
        <name>Mg(2+)</name>
        <dbReference type="ChEBI" id="CHEBI:18420"/>
    </ligand>
</feature>
<feature type="binding site" evidence="1">
    <location>
        <position position="140"/>
    </location>
    <ligand>
        <name>Mg(2+)</name>
        <dbReference type="ChEBI" id="CHEBI:18420"/>
    </ligand>
</feature>
<feature type="binding site" evidence="1">
    <location>
        <begin position="147"/>
        <end position="149"/>
    </location>
    <ligand>
        <name>CTP</name>
        <dbReference type="ChEBI" id="CHEBI:37563"/>
        <note>allosteric inhibitor</note>
    </ligand>
</feature>
<feature type="binding site" evidence="1">
    <location>
        <begin position="187"/>
        <end position="192"/>
    </location>
    <ligand>
        <name>CTP</name>
        <dbReference type="ChEBI" id="CHEBI:37563"/>
        <note>allosteric inhibitor</note>
    </ligand>
</feature>
<feature type="binding site" evidence="1">
    <location>
        <begin position="187"/>
        <end position="192"/>
    </location>
    <ligand>
        <name>UTP</name>
        <dbReference type="ChEBI" id="CHEBI:46398"/>
    </ligand>
</feature>
<feature type="binding site" evidence="1">
    <location>
        <position position="223"/>
    </location>
    <ligand>
        <name>CTP</name>
        <dbReference type="ChEBI" id="CHEBI:37563"/>
        <note>allosteric inhibitor</note>
    </ligand>
</feature>
<feature type="binding site" evidence="1">
    <location>
        <position position="223"/>
    </location>
    <ligand>
        <name>UTP</name>
        <dbReference type="ChEBI" id="CHEBI:46398"/>
    </ligand>
</feature>
<feature type="binding site" evidence="1">
    <location>
        <position position="353"/>
    </location>
    <ligand>
        <name>L-glutamine</name>
        <dbReference type="ChEBI" id="CHEBI:58359"/>
    </ligand>
</feature>
<feature type="binding site" evidence="1">
    <location>
        <begin position="381"/>
        <end position="384"/>
    </location>
    <ligand>
        <name>L-glutamine</name>
        <dbReference type="ChEBI" id="CHEBI:58359"/>
    </ligand>
</feature>
<feature type="binding site" evidence="1">
    <location>
        <position position="404"/>
    </location>
    <ligand>
        <name>L-glutamine</name>
        <dbReference type="ChEBI" id="CHEBI:58359"/>
    </ligand>
</feature>
<feature type="binding site" evidence="1">
    <location>
        <position position="464"/>
    </location>
    <ligand>
        <name>L-glutamine</name>
        <dbReference type="ChEBI" id="CHEBI:58359"/>
    </ligand>
</feature>
<name>PYRG_DEIGD</name>
<dbReference type="EC" id="6.3.4.2" evidence="1"/>
<dbReference type="EMBL" id="CP000359">
    <property type="protein sequence ID" value="ABF45129.1"/>
    <property type="molecule type" value="Genomic_DNA"/>
</dbReference>
<dbReference type="RefSeq" id="WP_011529968.1">
    <property type="nucleotide sequence ID" value="NC_008025.1"/>
</dbReference>
<dbReference type="SMR" id="Q1J055"/>
<dbReference type="STRING" id="319795.Dgeo_0827"/>
<dbReference type="MEROPS" id="C26.964"/>
<dbReference type="KEGG" id="dge:Dgeo_0827"/>
<dbReference type="eggNOG" id="COG0504">
    <property type="taxonomic scope" value="Bacteria"/>
</dbReference>
<dbReference type="HOGENOM" id="CLU_011675_5_0_0"/>
<dbReference type="UniPathway" id="UPA00159">
    <property type="reaction ID" value="UER00277"/>
</dbReference>
<dbReference type="Proteomes" id="UP000002431">
    <property type="component" value="Chromosome"/>
</dbReference>
<dbReference type="GO" id="GO:0005829">
    <property type="term" value="C:cytosol"/>
    <property type="evidence" value="ECO:0007669"/>
    <property type="project" value="TreeGrafter"/>
</dbReference>
<dbReference type="GO" id="GO:0005524">
    <property type="term" value="F:ATP binding"/>
    <property type="evidence" value="ECO:0007669"/>
    <property type="project" value="UniProtKB-KW"/>
</dbReference>
<dbReference type="GO" id="GO:0003883">
    <property type="term" value="F:CTP synthase activity"/>
    <property type="evidence" value="ECO:0007669"/>
    <property type="project" value="UniProtKB-UniRule"/>
</dbReference>
<dbReference type="GO" id="GO:0004359">
    <property type="term" value="F:glutaminase activity"/>
    <property type="evidence" value="ECO:0007669"/>
    <property type="project" value="RHEA"/>
</dbReference>
<dbReference type="GO" id="GO:0042802">
    <property type="term" value="F:identical protein binding"/>
    <property type="evidence" value="ECO:0007669"/>
    <property type="project" value="TreeGrafter"/>
</dbReference>
<dbReference type="GO" id="GO:0046872">
    <property type="term" value="F:metal ion binding"/>
    <property type="evidence" value="ECO:0007669"/>
    <property type="project" value="UniProtKB-KW"/>
</dbReference>
<dbReference type="GO" id="GO:0044210">
    <property type="term" value="P:'de novo' CTP biosynthetic process"/>
    <property type="evidence" value="ECO:0007669"/>
    <property type="project" value="UniProtKB-UniRule"/>
</dbReference>
<dbReference type="GO" id="GO:0019856">
    <property type="term" value="P:pyrimidine nucleobase biosynthetic process"/>
    <property type="evidence" value="ECO:0007669"/>
    <property type="project" value="TreeGrafter"/>
</dbReference>
<dbReference type="CDD" id="cd03113">
    <property type="entry name" value="CTPS_N"/>
    <property type="match status" value="1"/>
</dbReference>
<dbReference type="CDD" id="cd01746">
    <property type="entry name" value="GATase1_CTP_Synthase"/>
    <property type="match status" value="1"/>
</dbReference>
<dbReference type="FunFam" id="3.40.50.300:FF:000009">
    <property type="entry name" value="CTP synthase"/>
    <property type="match status" value="1"/>
</dbReference>
<dbReference type="FunFam" id="3.40.50.880:FF:000002">
    <property type="entry name" value="CTP synthase"/>
    <property type="match status" value="1"/>
</dbReference>
<dbReference type="Gene3D" id="3.40.50.880">
    <property type="match status" value="1"/>
</dbReference>
<dbReference type="Gene3D" id="3.40.50.300">
    <property type="entry name" value="P-loop containing nucleotide triphosphate hydrolases"/>
    <property type="match status" value="1"/>
</dbReference>
<dbReference type="HAMAP" id="MF_01227">
    <property type="entry name" value="PyrG"/>
    <property type="match status" value="1"/>
</dbReference>
<dbReference type="InterPro" id="IPR029062">
    <property type="entry name" value="Class_I_gatase-like"/>
</dbReference>
<dbReference type="InterPro" id="IPR004468">
    <property type="entry name" value="CTP_synthase"/>
</dbReference>
<dbReference type="InterPro" id="IPR017456">
    <property type="entry name" value="CTP_synthase_N"/>
</dbReference>
<dbReference type="InterPro" id="IPR017926">
    <property type="entry name" value="GATASE"/>
</dbReference>
<dbReference type="InterPro" id="IPR033828">
    <property type="entry name" value="GATase1_CTP_Synthase"/>
</dbReference>
<dbReference type="InterPro" id="IPR027417">
    <property type="entry name" value="P-loop_NTPase"/>
</dbReference>
<dbReference type="NCBIfam" id="NF003792">
    <property type="entry name" value="PRK05380.1"/>
    <property type="match status" value="1"/>
</dbReference>
<dbReference type="NCBIfam" id="TIGR00337">
    <property type="entry name" value="PyrG"/>
    <property type="match status" value="1"/>
</dbReference>
<dbReference type="PANTHER" id="PTHR11550">
    <property type="entry name" value="CTP SYNTHASE"/>
    <property type="match status" value="1"/>
</dbReference>
<dbReference type="PANTHER" id="PTHR11550:SF0">
    <property type="entry name" value="CTP SYNTHASE-RELATED"/>
    <property type="match status" value="1"/>
</dbReference>
<dbReference type="Pfam" id="PF06418">
    <property type="entry name" value="CTP_synth_N"/>
    <property type="match status" value="1"/>
</dbReference>
<dbReference type="Pfam" id="PF00117">
    <property type="entry name" value="GATase"/>
    <property type="match status" value="1"/>
</dbReference>
<dbReference type="SUPFAM" id="SSF52317">
    <property type="entry name" value="Class I glutamine amidotransferase-like"/>
    <property type="match status" value="1"/>
</dbReference>
<dbReference type="SUPFAM" id="SSF52540">
    <property type="entry name" value="P-loop containing nucleoside triphosphate hydrolases"/>
    <property type="match status" value="1"/>
</dbReference>
<dbReference type="PROSITE" id="PS51273">
    <property type="entry name" value="GATASE_TYPE_1"/>
    <property type="match status" value="1"/>
</dbReference>
<sequence length="553" mass="59784">MKYIFVTGGVVSSLGKGVASASLGALLRARGYKVTAVKIDPYINIDAGTMRPYEHGEVFVTASGAETDLDIGNYERFLDLDIPPGSNITTGQVYLEVIRKERAGDYLSQTVQVIPHVTDEIKRRIRTAGENAGAEIVLIEVGGTVGDIESLPFLEAIRQFKFDEGDENVLYIHLTLVPYLGTSNEFKTKPTQHSVAELRSVGISPDIVMVRSKEKLPPEITRKIALFTSVRENRVFSSYDVGHVYELPLALEEQGLGKAVEDLLGLERTHPNLGVWQNAVRTLKHPNHEVTIAIAGKYTEMPDAYLSLLESLTHAGIANDARVNIKWVNAEELAEGDLETQLGDADGILVPGGFGIRGIEGKIKAAEYARTHNVPYLGICLGMQIAVIEYARHVAGLTGANSAEFDPYAPHKVIDLMPEQLEVEGLGGTMRLGDWPMELRAGTKIAELYGVPQGGTVRERHRHRYEVNPAYVGQLQDAGLVISGVTPGVQGRGAGLVESIEIPGHPFFVALQAHPEFKSRPMRPSPPFAGFVAAALQSGPSSAASGQTVAAEA</sequence>
<protein>
    <recommendedName>
        <fullName evidence="1">CTP synthase</fullName>
        <ecNumber evidence="1">6.3.4.2</ecNumber>
    </recommendedName>
    <alternativeName>
        <fullName evidence="1">Cytidine 5'-triphosphate synthase</fullName>
    </alternativeName>
    <alternativeName>
        <fullName evidence="1">Cytidine triphosphate synthetase</fullName>
        <shortName evidence="1">CTP synthetase</shortName>
        <shortName evidence="1">CTPS</shortName>
    </alternativeName>
    <alternativeName>
        <fullName evidence="1">UTP--ammonia ligase</fullName>
    </alternativeName>
</protein>
<accession>Q1J055</accession>